<name>Y2868_BACLD</name>
<organism>
    <name type="scientific">Bacillus licheniformis (strain ATCC 14580 / DSM 13 / JCM 2505 / CCUG 7422 / NBRC 12200 / NCIMB 9375 / NCTC 10341 / NRRL NRS-1264 / Gibson 46)</name>
    <dbReference type="NCBI Taxonomy" id="279010"/>
    <lineage>
        <taxon>Bacteria</taxon>
        <taxon>Bacillati</taxon>
        <taxon>Bacillota</taxon>
        <taxon>Bacilli</taxon>
        <taxon>Bacillales</taxon>
        <taxon>Bacillaceae</taxon>
        <taxon>Bacillus</taxon>
    </lineage>
</organism>
<proteinExistence type="inferred from homology"/>
<keyword id="KW-1185">Reference proteome</keyword>
<comment type="similarity">
    <text evidence="1">Belongs to the UPF0297 family.</text>
</comment>
<accession>Q65GS6</accession>
<gene>
    <name type="ordered locus">BLi02868</name>
    <name type="ordered locus">BL02032</name>
</gene>
<protein>
    <recommendedName>
        <fullName evidence="1">UPF0297 protein BLi02868/BL02032</fullName>
    </recommendedName>
</protein>
<sequence length="88" mass="10270">MSSFDKTMKFNFSDDSMETNVNEVLITVHDALQEKGYNPINQIVGYLLSGDPAYIPRHRDARNLIRKIERDEIIEELVKSYLEQHKEA</sequence>
<reference key="1">
    <citation type="journal article" date="2004" name="J. Mol. Microbiol. Biotechnol.">
        <title>The complete genome sequence of Bacillus licheniformis DSM13, an organism with great industrial potential.</title>
        <authorList>
            <person name="Veith B."/>
            <person name="Herzberg C."/>
            <person name="Steckel S."/>
            <person name="Feesche J."/>
            <person name="Maurer K.H."/>
            <person name="Ehrenreich P."/>
            <person name="Baeumer S."/>
            <person name="Henne A."/>
            <person name="Liesegang H."/>
            <person name="Merkl R."/>
            <person name="Ehrenreich A."/>
            <person name="Gottschalk G."/>
        </authorList>
    </citation>
    <scope>NUCLEOTIDE SEQUENCE [LARGE SCALE GENOMIC DNA]</scope>
    <source>
        <strain>ATCC 14580 / DSM 13 / JCM 2505 / CCUG 7422 / NBRC 12200 / NCIMB 9375 / NCTC 10341 / NRRL NRS-1264 / Gibson 46</strain>
    </source>
</reference>
<reference key="2">
    <citation type="journal article" date="2004" name="Genome Biol.">
        <title>Complete genome sequence of the industrial bacterium Bacillus licheniformis and comparisons with closely related Bacillus species.</title>
        <authorList>
            <person name="Rey M.W."/>
            <person name="Ramaiya P."/>
            <person name="Nelson B.A."/>
            <person name="Brody-Karpin S.D."/>
            <person name="Zaretsky E.J."/>
            <person name="Tang M."/>
            <person name="Lopez de Leon A."/>
            <person name="Xiang H."/>
            <person name="Gusti V."/>
            <person name="Clausen I.G."/>
            <person name="Olsen P.B."/>
            <person name="Rasmussen M.D."/>
            <person name="Andersen J.T."/>
            <person name="Joergensen P.L."/>
            <person name="Larsen T.S."/>
            <person name="Sorokin A."/>
            <person name="Bolotin A."/>
            <person name="Lapidus A."/>
            <person name="Galleron N."/>
            <person name="Ehrlich S.D."/>
            <person name="Berka R.M."/>
        </authorList>
    </citation>
    <scope>NUCLEOTIDE SEQUENCE [LARGE SCALE GENOMIC DNA]</scope>
    <source>
        <strain>ATCC 14580 / DSM 13 / JCM 2505 / CCUG 7422 / NBRC 12200 / NCIMB 9375 / NCTC 10341 / NRRL NRS-1264 / Gibson 46</strain>
    </source>
</reference>
<dbReference type="EMBL" id="AE017333">
    <property type="protein sequence ID" value="AAU41738.1"/>
    <property type="molecule type" value="Genomic_DNA"/>
</dbReference>
<dbReference type="EMBL" id="CP000002">
    <property type="protein sequence ID" value="AAU24374.1"/>
    <property type="molecule type" value="Genomic_DNA"/>
</dbReference>
<dbReference type="RefSeq" id="WP_003183920.1">
    <property type="nucleotide sequence ID" value="NC_006322.1"/>
</dbReference>
<dbReference type="SMR" id="Q65GS6"/>
<dbReference type="STRING" id="279010.BL02032"/>
<dbReference type="KEGG" id="bld:BLi02868"/>
<dbReference type="KEGG" id="bli:BL02032"/>
<dbReference type="eggNOG" id="COG4472">
    <property type="taxonomic scope" value="Bacteria"/>
</dbReference>
<dbReference type="HOGENOM" id="CLU_162466_0_0_9"/>
<dbReference type="Proteomes" id="UP000000606">
    <property type="component" value="Chromosome"/>
</dbReference>
<dbReference type="HAMAP" id="MF_01507">
    <property type="entry name" value="UPF0297"/>
    <property type="match status" value="1"/>
</dbReference>
<dbReference type="InterPro" id="IPR009309">
    <property type="entry name" value="IreB"/>
</dbReference>
<dbReference type="NCBIfam" id="NF003997">
    <property type="entry name" value="PRK05473.1"/>
    <property type="match status" value="1"/>
</dbReference>
<dbReference type="PANTHER" id="PTHR40067">
    <property type="entry name" value="UPF0297 PROTEIN YRZL"/>
    <property type="match status" value="1"/>
</dbReference>
<dbReference type="PANTHER" id="PTHR40067:SF1">
    <property type="entry name" value="UPF0297 PROTEIN YRZL"/>
    <property type="match status" value="1"/>
</dbReference>
<dbReference type="Pfam" id="PF06135">
    <property type="entry name" value="IreB"/>
    <property type="match status" value="1"/>
</dbReference>
<dbReference type="PIRSF" id="PIRSF037258">
    <property type="entry name" value="DUF965_bac"/>
    <property type="match status" value="1"/>
</dbReference>
<evidence type="ECO:0000255" key="1">
    <source>
        <dbReference type="HAMAP-Rule" id="MF_01507"/>
    </source>
</evidence>
<feature type="chain" id="PRO_0000216962" description="UPF0297 protein BLi02868/BL02032">
    <location>
        <begin position="1"/>
        <end position="88"/>
    </location>
</feature>